<gene>
    <name evidence="1" type="primary">rpsR</name>
    <name type="ordered locus">RHECIAT_CH0001507</name>
</gene>
<accession>B3PUT6</accession>
<proteinExistence type="inferred from homology"/>
<protein>
    <recommendedName>
        <fullName evidence="1">Small ribosomal subunit protein bS18</fullName>
    </recommendedName>
    <alternativeName>
        <fullName evidence="3">30S ribosomal protein S18</fullName>
    </alternativeName>
</protein>
<evidence type="ECO:0000255" key="1">
    <source>
        <dbReference type="HAMAP-Rule" id="MF_00270"/>
    </source>
</evidence>
<evidence type="ECO:0000256" key="2">
    <source>
        <dbReference type="SAM" id="MobiDB-lite"/>
    </source>
</evidence>
<evidence type="ECO:0000305" key="3"/>
<feature type="chain" id="PRO_1000114440" description="Small ribosomal subunit protein bS18">
    <location>
        <begin position="1"/>
        <end position="82"/>
    </location>
</feature>
<feature type="region of interest" description="Disordered" evidence="2">
    <location>
        <begin position="1"/>
        <end position="20"/>
    </location>
</feature>
<organism>
    <name type="scientific">Rhizobium etli (strain CIAT 652)</name>
    <dbReference type="NCBI Taxonomy" id="491916"/>
    <lineage>
        <taxon>Bacteria</taxon>
        <taxon>Pseudomonadati</taxon>
        <taxon>Pseudomonadota</taxon>
        <taxon>Alphaproteobacteria</taxon>
        <taxon>Hyphomicrobiales</taxon>
        <taxon>Rhizobiaceae</taxon>
        <taxon>Rhizobium/Agrobacterium group</taxon>
        <taxon>Rhizobium</taxon>
    </lineage>
</organism>
<sequence>MSEASSAPVRRPFHRRRKTCPFSGANAPRIDYKDVRLLQRYISERGKIVPSRITAVSQKKQRELAQAIKRARFLGLLPYVVA</sequence>
<dbReference type="EMBL" id="CP001074">
    <property type="protein sequence ID" value="ACE90485.1"/>
    <property type="molecule type" value="Genomic_DNA"/>
</dbReference>
<dbReference type="SMR" id="B3PUT6"/>
<dbReference type="KEGG" id="rec:RHECIAT_CH0001507"/>
<dbReference type="eggNOG" id="COG0238">
    <property type="taxonomic scope" value="Bacteria"/>
</dbReference>
<dbReference type="HOGENOM" id="CLU_148710_2_2_5"/>
<dbReference type="Proteomes" id="UP000008817">
    <property type="component" value="Chromosome"/>
</dbReference>
<dbReference type="GO" id="GO:0022627">
    <property type="term" value="C:cytosolic small ribosomal subunit"/>
    <property type="evidence" value="ECO:0007669"/>
    <property type="project" value="TreeGrafter"/>
</dbReference>
<dbReference type="GO" id="GO:0070181">
    <property type="term" value="F:small ribosomal subunit rRNA binding"/>
    <property type="evidence" value="ECO:0007669"/>
    <property type="project" value="TreeGrafter"/>
</dbReference>
<dbReference type="GO" id="GO:0003735">
    <property type="term" value="F:structural constituent of ribosome"/>
    <property type="evidence" value="ECO:0007669"/>
    <property type="project" value="InterPro"/>
</dbReference>
<dbReference type="GO" id="GO:0006412">
    <property type="term" value="P:translation"/>
    <property type="evidence" value="ECO:0007669"/>
    <property type="project" value="UniProtKB-UniRule"/>
</dbReference>
<dbReference type="Gene3D" id="4.10.640.10">
    <property type="entry name" value="Ribosomal protein S18"/>
    <property type="match status" value="1"/>
</dbReference>
<dbReference type="HAMAP" id="MF_00270">
    <property type="entry name" value="Ribosomal_bS18"/>
    <property type="match status" value="1"/>
</dbReference>
<dbReference type="InterPro" id="IPR001648">
    <property type="entry name" value="Ribosomal_bS18"/>
</dbReference>
<dbReference type="InterPro" id="IPR018275">
    <property type="entry name" value="Ribosomal_bS18_CS"/>
</dbReference>
<dbReference type="InterPro" id="IPR036870">
    <property type="entry name" value="Ribosomal_bS18_sf"/>
</dbReference>
<dbReference type="NCBIfam" id="TIGR00165">
    <property type="entry name" value="S18"/>
    <property type="match status" value="1"/>
</dbReference>
<dbReference type="PANTHER" id="PTHR13479">
    <property type="entry name" value="30S RIBOSOMAL PROTEIN S18"/>
    <property type="match status" value="1"/>
</dbReference>
<dbReference type="PANTHER" id="PTHR13479:SF40">
    <property type="entry name" value="SMALL RIBOSOMAL SUBUNIT PROTEIN BS18M"/>
    <property type="match status" value="1"/>
</dbReference>
<dbReference type="Pfam" id="PF01084">
    <property type="entry name" value="Ribosomal_S18"/>
    <property type="match status" value="1"/>
</dbReference>
<dbReference type="PRINTS" id="PR00974">
    <property type="entry name" value="RIBOSOMALS18"/>
</dbReference>
<dbReference type="SUPFAM" id="SSF46911">
    <property type="entry name" value="Ribosomal protein S18"/>
    <property type="match status" value="1"/>
</dbReference>
<dbReference type="PROSITE" id="PS00057">
    <property type="entry name" value="RIBOSOMAL_S18"/>
    <property type="match status" value="1"/>
</dbReference>
<comment type="function">
    <text evidence="1">Binds as a heterodimer with protein bS6 to the central domain of the 16S rRNA, where it helps stabilize the platform of the 30S subunit.</text>
</comment>
<comment type="subunit">
    <text evidence="1">Part of the 30S ribosomal subunit. Forms a tight heterodimer with protein bS6.</text>
</comment>
<comment type="similarity">
    <text evidence="1">Belongs to the bacterial ribosomal protein bS18 family.</text>
</comment>
<keyword id="KW-0687">Ribonucleoprotein</keyword>
<keyword id="KW-0689">Ribosomal protein</keyword>
<keyword id="KW-0694">RNA-binding</keyword>
<keyword id="KW-0699">rRNA-binding</keyword>
<name>RS18_RHIE6</name>
<reference key="1">
    <citation type="journal article" date="2010" name="Appl. Environ. Microbiol.">
        <title>Conserved symbiotic plasmid DNA sequences in the multireplicon pangenomic structure of Rhizobium etli.</title>
        <authorList>
            <person name="Gonzalez V."/>
            <person name="Acosta J.L."/>
            <person name="Santamaria R.I."/>
            <person name="Bustos P."/>
            <person name="Fernandez J.L."/>
            <person name="Hernandez Gonzalez I.L."/>
            <person name="Diaz R."/>
            <person name="Flores M."/>
            <person name="Palacios R."/>
            <person name="Mora J."/>
            <person name="Davila G."/>
        </authorList>
    </citation>
    <scope>NUCLEOTIDE SEQUENCE [LARGE SCALE GENOMIC DNA]</scope>
    <source>
        <strain>CIAT 652</strain>
    </source>
</reference>